<protein>
    <recommendedName>
        <fullName evidence="1">Ribonuclease P protein component</fullName>
        <shortName evidence="1">RNase P protein</shortName>
        <shortName evidence="1">RNaseP protein</shortName>
        <ecNumber evidence="1">3.1.26.5</ecNumber>
    </recommendedName>
    <alternativeName>
        <fullName evidence="1">Protein C5</fullName>
    </alternativeName>
</protein>
<reference key="1">
    <citation type="journal article" date="2011" name="Proc. Natl. Acad. Sci. U.S.A.">
        <title>Genomic anatomy of Escherichia coli O157:H7 outbreaks.</title>
        <authorList>
            <person name="Eppinger M."/>
            <person name="Mammel M.K."/>
            <person name="Leclerc J.E."/>
            <person name="Ravel J."/>
            <person name="Cebula T.A."/>
        </authorList>
    </citation>
    <scope>NUCLEOTIDE SEQUENCE [LARGE SCALE GENOMIC DNA]</scope>
    <source>
        <strain>EC4115 / EHEC</strain>
    </source>
</reference>
<organism>
    <name type="scientific">Escherichia coli O157:H7 (strain EC4115 / EHEC)</name>
    <dbReference type="NCBI Taxonomy" id="444450"/>
    <lineage>
        <taxon>Bacteria</taxon>
        <taxon>Pseudomonadati</taxon>
        <taxon>Pseudomonadota</taxon>
        <taxon>Gammaproteobacteria</taxon>
        <taxon>Enterobacterales</taxon>
        <taxon>Enterobacteriaceae</taxon>
        <taxon>Escherichia</taxon>
    </lineage>
</organism>
<sequence length="119" mass="13788">MVKLAFPRELRLLTPSQFTFVFQQPQRAGTPQITILGRLNSLGHPRIGLTVAKKNVRRAHERNRIKRLTRESFRLRQHELPAMDFVVVAKKGVANLDNRALSEALEKLWRRHCRLARGS</sequence>
<keyword id="KW-0255">Endonuclease</keyword>
<keyword id="KW-0378">Hydrolase</keyword>
<keyword id="KW-0540">Nuclease</keyword>
<keyword id="KW-0694">RNA-binding</keyword>
<keyword id="KW-0819">tRNA processing</keyword>
<accession>B5YXA8</accession>
<name>RNPA_ECO5E</name>
<evidence type="ECO:0000255" key="1">
    <source>
        <dbReference type="HAMAP-Rule" id="MF_00227"/>
    </source>
</evidence>
<comment type="function">
    <text evidence="1">RNaseP catalyzes the removal of the 5'-leader sequence from pre-tRNA to produce the mature 5'-terminus. It can also cleave other RNA substrates such as 4.5S RNA. The protein component plays an auxiliary but essential role in vivo by binding to the 5'-leader sequence and broadening the substrate specificity of the ribozyme.</text>
</comment>
<comment type="catalytic activity">
    <reaction evidence="1">
        <text>Endonucleolytic cleavage of RNA, removing 5'-extranucleotides from tRNA precursor.</text>
        <dbReference type="EC" id="3.1.26.5"/>
    </reaction>
</comment>
<comment type="subunit">
    <text evidence="1">Consists of a catalytic RNA component (M1 or rnpB) and a protein subunit.</text>
</comment>
<comment type="similarity">
    <text evidence="1">Belongs to the RnpA family.</text>
</comment>
<proteinExistence type="inferred from homology"/>
<gene>
    <name evidence="1" type="primary">rnpA</name>
    <name type="ordered locus">ECH74115_5134</name>
</gene>
<dbReference type="EC" id="3.1.26.5" evidence="1"/>
<dbReference type="EMBL" id="CP001164">
    <property type="protein sequence ID" value="ACI35360.1"/>
    <property type="molecule type" value="Genomic_DNA"/>
</dbReference>
<dbReference type="RefSeq" id="WP_000239733.1">
    <property type="nucleotide sequence ID" value="NC_011353.1"/>
</dbReference>
<dbReference type="SMR" id="B5YXA8"/>
<dbReference type="KEGG" id="ecf:ECH74115_5134"/>
<dbReference type="HOGENOM" id="CLU_117179_11_0_6"/>
<dbReference type="GO" id="GO:0030677">
    <property type="term" value="C:ribonuclease P complex"/>
    <property type="evidence" value="ECO:0007669"/>
    <property type="project" value="TreeGrafter"/>
</dbReference>
<dbReference type="GO" id="GO:0042781">
    <property type="term" value="F:3'-tRNA processing endoribonuclease activity"/>
    <property type="evidence" value="ECO:0007669"/>
    <property type="project" value="TreeGrafter"/>
</dbReference>
<dbReference type="GO" id="GO:0004526">
    <property type="term" value="F:ribonuclease P activity"/>
    <property type="evidence" value="ECO:0007669"/>
    <property type="project" value="UniProtKB-UniRule"/>
</dbReference>
<dbReference type="GO" id="GO:0000049">
    <property type="term" value="F:tRNA binding"/>
    <property type="evidence" value="ECO:0007669"/>
    <property type="project" value="UniProtKB-UniRule"/>
</dbReference>
<dbReference type="GO" id="GO:0001682">
    <property type="term" value="P:tRNA 5'-leader removal"/>
    <property type="evidence" value="ECO:0007669"/>
    <property type="project" value="UniProtKB-UniRule"/>
</dbReference>
<dbReference type="FunFam" id="3.30.230.10:FF:000016">
    <property type="entry name" value="Ribonuclease P protein component"/>
    <property type="match status" value="1"/>
</dbReference>
<dbReference type="Gene3D" id="3.30.230.10">
    <property type="match status" value="1"/>
</dbReference>
<dbReference type="HAMAP" id="MF_00227">
    <property type="entry name" value="RNase_P"/>
    <property type="match status" value="1"/>
</dbReference>
<dbReference type="InterPro" id="IPR020568">
    <property type="entry name" value="Ribosomal_Su5_D2-typ_SF"/>
</dbReference>
<dbReference type="InterPro" id="IPR014721">
    <property type="entry name" value="Ribsml_uS5_D2-typ_fold_subgr"/>
</dbReference>
<dbReference type="InterPro" id="IPR000100">
    <property type="entry name" value="RNase_P"/>
</dbReference>
<dbReference type="InterPro" id="IPR020539">
    <property type="entry name" value="RNase_P_CS"/>
</dbReference>
<dbReference type="NCBIfam" id="TIGR00188">
    <property type="entry name" value="rnpA"/>
    <property type="match status" value="1"/>
</dbReference>
<dbReference type="PANTHER" id="PTHR33992">
    <property type="entry name" value="RIBONUCLEASE P PROTEIN COMPONENT"/>
    <property type="match status" value="1"/>
</dbReference>
<dbReference type="PANTHER" id="PTHR33992:SF1">
    <property type="entry name" value="RIBONUCLEASE P PROTEIN COMPONENT"/>
    <property type="match status" value="1"/>
</dbReference>
<dbReference type="Pfam" id="PF00825">
    <property type="entry name" value="Ribonuclease_P"/>
    <property type="match status" value="1"/>
</dbReference>
<dbReference type="SUPFAM" id="SSF54211">
    <property type="entry name" value="Ribosomal protein S5 domain 2-like"/>
    <property type="match status" value="1"/>
</dbReference>
<dbReference type="PROSITE" id="PS00648">
    <property type="entry name" value="RIBONUCLEASE_P"/>
    <property type="match status" value="1"/>
</dbReference>
<feature type="chain" id="PRO_1000100356" description="Ribonuclease P protein component">
    <location>
        <begin position="1"/>
        <end position="119"/>
    </location>
</feature>